<protein>
    <recommendedName>
        <fullName evidence="1">Ribosome-recycling factor</fullName>
        <shortName evidence="1">RRF</shortName>
    </recommendedName>
    <alternativeName>
        <fullName evidence="1">Ribosome-releasing factor</fullName>
    </alternativeName>
</protein>
<gene>
    <name evidence="1" type="primary">frr</name>
    <name type="ordered locus">GM21_1488</name>
</gene>
<proteinExistence type="inferred from homology"/>
<accession>C6E515</accession>
<evidence type="ECO:0000255" key="1">
    <source>
        <dbReference type="HAMAP-Rule" id="MF_00040"/>
    </source>
</evidence>
<dbReference type="EMBL" id="CP001661">
    <property type="protein sequence ID" value="ACT17544.1"/>
    <property type="molecule type" value="Genomic_DNA"/>
</dbReference>
<dbReference type="SMR" id="C6E515"/>
<dbReference type="STRING" id="443144.GM21_1488"/>
<dbReference type="KEGG" id="gem:GM21_1488"/>
<dbReference type="eggNOG" id="COG0233">
    <property type="taxonomic scope" value="Bacteria"/>
</dbReference>
<dbReference type="HOGENOM" id="CLU_073981_2_0_7"/>
<dbReference type="OrthoDB" id="9804006at2"/>
<dbReference type="GO" id="GO:0005829">
    <property type="term" value="C:cytosol"/>
    <property type="evidence" value="ECO:0007669"/>
    <property type="project" value="GOC"/>
</dbReference>
<dbReference type="GO" id="GO:0043023">
    <property type="term" value="F:ribosomal large subunit binding"/>
    <property type="evidence" value="ECO:0007669"/>
    <property type="project" value="TreeGrafter"/>
</dbReference>
<dbReference type="GO" id="GO:0002184">
    <property type="term" value="P:cytoplasmic translational termination"/>
    <property type="evidence" value="ECO:0007669"/>
    <property type="project" value="TreeGrafter"/>
</dbReference>
<dbReference type="CDD" id="cd00520">
    <property type="entry name" value="RRF"/>
    <property type="match status" value="1"/>
</dbReference>
<dbReference type="FunFam" id="1.10.132.20:FF:000001">
    <property type="entry name" value="Ribosome-recycling factor"/>
    <property type="match status" value="1"/>
</dbReference>
<dbReference type="FunFam" id="3.30.1360.40:FF:000001">
    <property type="entry name" value="Ribosome-recycling factor"/>
    <property type="match status" value="1"/>
</dbReference>
<dbReference type="Gene3D" id="3.30.1360.40">
    <property type="match status" value="1"/>
</dbReference>
<dbReference type="Gene3D" id="1.10.132.20">
    <property type="entry name" value="Ribosome-recycling factor"/>
    <property type="match status" value="1"/>
</dbReference>
<dbReference type="HAMAP" id="MF_00040">
    <property type="entry name" value="RRF"/>
    <property type="match status" value="1"/>
</dbReference>
<dbReference type="InterPro" id="IPR002661">
    <property type="entry name" value="Ribosome_recyc_fac"/>
</dbReference>
<dbReference type="InterPro" id="IPR023584">
    <property type="entry name" value="Ribosome_recyc_fac_dom"/>
</dbReference>
<dbReference type="InterPro" id="IPR036191">
    <property type="entry name" value="RRF_sf"/>
</dbReference>
<dbReference type="NCBIfam" id="TIGR00496">
    <property type="entry name" value="frr"/>
    <property type="match status" value="1"/>
</dbReference>
<dbReference type="PANTHER" id="PTHR20982:SF3">
    <property type="entry name" value="MITOCHONDRIAL RIBOSOME RECYCLING FACTOR PSEUDO 1"/>
    <property type="match status" value="1"/>
</dbReference>
<dbReference type="PANTHER" id="PTHR20982">
    <property type="entry name" value="RIBOSOME RECYCLING FACTOR"/>
    <property type="match status" value="1"/>
</dbReference>
<dbReference type="Pfam" id="PF01765">
    <property type="entry name" value="RRF"/>
    <property type="match status" value="1"/>
</dbReference>
<dbReference type="SUPFAM" id="SSF55194">
    <property type="entry name" value="Ribosome recycling factor, RRF"/>
    <property type="match status" value="1"/>
</dbReference>
<name>RRF_GEOSM</name>
<reference key="1">
    <citation type="submission" date="2009-07" db="EMBL/GenBank/DDBJ databases">
        <title>Complete sequence of Geobacter sp. M21.</title>
        <authorList>
            <consortium name="US DOE Joint Genome Institute"/>
            <person name="Lucas S."/>
            <person name="Copeland A."/>
            <person name="Lapidus A."/>
            <person name="Glavina del Rio T."/>
            <person name="Dalin E."/>
            <person name="Tice H."/>
            <person name="Bruce D."/>
            <person name="Goodwin L."/>
            <person name="Pitluck S."/>
            <person name="Saunders E."/>
            <person name="Brettin T."/>
            <person name="Detter J.C."/>
            <person name="Han C."/>
            <person name="Larimer F."/>
            <person name="Land M."/>
            <person name="Hauser L."/>
            <person name="Kyrpides N."/>
            <person name="Ovchinnikova G."/>
            <person name="Lovley D."/>
        </authorList>
    </citation>
    <scope>NUCLEOTIDE SEQUENCE [LARGE SCALE GENOMIC DNA]</scope>
    <source>
        <strain>M21</strain>
    </source>
</reference>
<comment type="function">
    <text evidence="1">Responsible for the release of ribosomes from messenger RNA at the termination of protein biosynthesis. May increase the efficiency of translation by recycling ribosomes from one round of translation to another.</text>
</comment>
<comment type="subcellular location">
    <subcellularLocation>
        <location evidence="1">Cytoplasm</location>
    </subcellularLocation>
</comment>
<comment type="similarity">
    <text evidence="1">Belongs to the RRF family.</text>
</comment>
<organism>
    <name type="scientific">Geobacter sp. (strain M21)</name>
    <dbReference type="NCBI Taxonomy" id="443144"/>
    <lineage>
        <taxon>Bacteria</taxon>
        <taxon>Pseudomonadati</taxon>
        <taxon>Thermodesulfobacteriota</taxon>
        <taxon>Desulfuromonadia</taxon>
        <taxon>Geobacterales</taxon>
        <taxon>Geobacteraceae</taxon>
        <taxon>Geobacter</taxon>
    </lineage>
</organism>
<feature type="chain" id="PRO_1000202099" description="Ribosome-recycling factor">
    <location>
        <begin position="1"/>
        <end position="185"/>
    </location>
</feature>
<keyword id="KW-0963">Cytoplasm</keyword>
<keyword id="KW-0648">Protein biosynthesis</keyword>
<sequence>MVKDVISNMNVHMGKSIESLRKEYQKVRTGRATTSLLDDIKIDSYGTLSPLNQVATLAIPEARTITISPWDSKMIAPIEKAIMNSNLGLNPANDGKMIRLVLPPLTEERRKDIVKQLKRDAEEAKVALRNIRRDAIDQLKKLEKDKSISEDELKRAEKDVQDSTNSHVAKVDEVLLHKEKEVMEV</sequence>